<proteinExistence type="inferred from homology"/>
<protein>
    <recommendedName>
        <fullName evidence="1">ATP-dependent Clp protease proteolytic subunit</fullName>
        <ecNumber evidence="1">3.4.21.92</ecNumber>
    </recommendedName>
    <alternativeName>
        <fullName evidence="1">Endopeptidase Clp</fullName>
    </alternativeName>
</protein>
<sequence length="196" mass="22106">MPIGVPRVPFRSPGEEDASWVDIYNRLYRERLLFLGQEVDSEISNQLISLMVYLSIEEENKDLYLFINSPGGWVIPGIAIYDTMQFVQPDVQTVCMGLAASMGSFLLAGGEITKRLAFPHARVMIHQPASSFYEAQTGEFILEAEELLKMRETITRVYVQRTGKPLWVISEDMERDVFMSAAEAQAHGIVDLVAVE</sequence>
<reference key="1">
    <citation type="journal article" date="2005" name="Plant Mol. Biol.">
        <title>Complete chloroplast genome sequence of Glycine max and comparative analyses with other legume genomes.</title>
        <authorList>
            <person name="Saski C."/>
            <person name="Lee S.-B."/>
            <person name="Daniell H."/>
            <person name="Wood T.C."/>
            <person name="Tomkins J."/>
            <person name="Kim H.-G."/>
            <person name="Jansen R.K."/>
        </authorList>
    </citation>
    <scope>NUCLEOTIDE SEQUENCE [LARGE SCALE GENOMIC DNA]</scope>
    <source>
        <strain>cv. PI 437654</strain>
    </source>
</reference>
<comment type="function">
    <text evidence="1">Cleaves peptides in various proteins in a process that requires ATP hydrolysis. Has a chymotrypsin-like activity. Plays a major role in the degradation of misfolded proteins.</text>
</comment>
<comment type="catalytic activity">
    <reaction evidence="1">
        <text>Hydrolysis of proteins to small peptides in the presence of ATP and magnesium. alpha-casein is the usual test substrate. In the absence of ATP, only oligopeptides shorter than five residues are hydrolyzed (such as succinyl-Leu-Tyr-|-NHMec, and Leu-Tyr-Leu-|-Tyr-Trp, in which cleavage of the -Tyr-|-Leu- and -Tyr-|-Trp bonds also occurs).</text>
        <dbReference type="EC" id="3.4.21.92"/>
    </reaction>
</comment>
<comment type="subunit">
    <text>Component of the chloroplastic Clp protease core complex.</text>
</comment>
<comment type="subcellular location">
    <subcellularLocation>
        <location evidence="1">Plastid</location>
        <location evidence="1">Chloroplast stroma</location>
    </subcellularLocation>
</comment>
<comment type="similarity">
    <text evidence="1">Belongs to the peptidase S14 family.</text>
</comment>
<keyword id="KW-0150">Chloroplast</keyword>
<keyword id="KW-0378">Hydrolase</keyword>
<keyword id="KW-0934">Plastid</keyword>
<keyword id="KW-0645">Protease</keyword>
<keyword id="KW-1185">Reference proteome</keyword>
<keyword id="KW-0720">Serine protease</keyword>
<dbReference type="EC" id="3.4.21.92" evidence="1"/>
<dbReference type="EMBL" id="DQ317523">
    <property type="protein sequence ID" value="ABC25148.1"/>
    <property type="molecule type" value="Genomic_DNA"/>
</dbReference>
<dbReference type="RefSeq" id="YP_538790.1">
    <property type="nucleotide sequence ID" value="NC_007942.1"/>
</dbReference>
<dbReference type="SMR" id="Q2PMR0"/>
<dbReference type="FunCoup" id="Q2PMR0">
    <property type="interactions" value="21"/>
</dbReference>
<dbReference type="STRING" id="3847.Q2PMR0"/>
<dbReference type="MEROPS" id="S14.002"/>
<dbReference type="PaxDb" id="3847-GLYMA20G10840.1"/>
<dbReference type="GeneID" id="3989322"/>
<dbReference type="KEGG" id="gmx:3989322"/>
<dbReference type="InParanoid" id="Q2PMR0"/>
<dbReference type="Proteomes" id="UP000008827">
    <property type="component" value="Chloroplast"/>
</dbReference>
<dbReference type="GO" id="GO:0009570">
    <property type="term" value="C:chloroplast stroma"/>
    <property type="evidence" value="ECO:0007669"/>
    <property type="project" value="UniProtKB-SubCell"/>
</dbReference>
<dbReference type="GO" id="GO:0009368">
    <property type="term" value="C:endopeptidase Clp complex"/>
    <property type="evidence" value="ECO:0000318"/>
    <property type="project" value="GO_Central"/>
</dbReference>
<dbReference type="GO" id="GO:0004176">
    <property type="term" value="F:ATP-dependent peptidase activity"/>
    <property type="evidence" value="ECO:0000318"/>
    <property type="project" value="GO_Central"/>
</dbReference>
<dbReference type="GO" id="GO:0051117">
    <property type="term" value="F:ATPase binding"/>
    <property type="evidence" value="ECO:0000318"/>
    <property type="project" value="GO_Central"/>
</dbReference>
<dbReference type="GO" id="GO:0004252">
    <property type="term" value="F:serine-type endopeptidase activity"/>
    <property type="evidence" value="ECO:0000318"/>
    <property type="project" value="GO_Central"/>
</dbReference>
<dbReference type="GO" id="GO:0006515">
    <property type="term" value="P:protein quality control for misfolded or incompletely synthesized proteins"/>
    <property type="evidence" value="ECO:0000318"/>
    <property type="project" value="GO_Central"/>
</dbReference>
<dbReference type="CDD" id="cd07017">
    <property type="entry name" value="S14_ClpP_2"/>
    <property type="match status" value="1"/>
</dbReference>
<dbReference type="FunFam" id="3.90.226.10:FF:000006">
    <property type="entry name" value="ATP-dependent Clp protease proteolytic subunit"/>
    <property type="match status" value="1"/>
</dbReference>
<dbReference type="Gene3D" id="3.90.226.10">
    <property type="entry name" value="2-enoyl-CoA Hydratase, Chain A, domain 1"/>
    <property type="match status" value="1"/>
</dbReference>
<dbReference type="HAMAP" id="MF_00444">
    <property type="entry name" value="ClpP"/>
    <property type="match status" value="1"/>
</dbReference>
<dbReference type="InterPro" id="IPR001907">
    <property type="entry name" value="ClpP"/>
</dbReference>
<dbReference type="InterPro" id="IPR029045">
    <property type="entry name" value="ClpP/crotonase-like_dom_sf"/>
</dbReference>
<dbReference type="InterPro" id="IPR023562">
    <property type="entry name" value="ClpP/TepA"/>
</dbReference>
<dbReference type="InterPro" id="IPR033135">
    <property type="entry name" value="ClpP_His_AS"/>
</dbReference>
<dbReference type="InterPro" id="IPR018215">
    <property type="entry name" value="ClpP_Ser_AS"/>
</dbReference>
<dbReference type="PANTHER" id="PTHR10381">
    <property type="entry name" value="ATP-DEPENDENT CLP PROTEASE PROTEOLYTIC SUBUNIT"/>
    <property type="match status" value="1"/>
</dbReference>
<dbReference type="PANTHER" id="PTHR10381:SF15">
    <property type="entry name" value="CHLOROPLASTIC ATP-DEPENDENT CLP PROTEASE PROTEOLYTIC SUBUNIT 1"/>
    <property type="match status" value="1"/>
</dbReference>
<dbReference type="Pfam" id="PF00574">
    <property type="entry name" value="CLP_protease"/>
    <property type="match status" value="1"/>
</dbReference>
<dbReference type="PRINTS" id="PR00127">
    <property type="entry name" value="CLPPROTEASEP"/>
</dbReference>
<dbReference type="SUPFAM" id="SSF52096">
    <property type="entry name" value="ClpP/crotonase"/>
    <property type="match status" value="1"/>
</dbReference>
<dbReference type="PROSITE" id="PS00382">
    <property type="entry name" value="CLP_PROTEASE_HIS"/>
    <property type="match status" value="1"/>
</dbReference>
<dbReference type="PROSITE" id="PS00381">
    <property type="entry name" value="CLP_PROTEASE_SER"/>
    <property type="match status" value="1"/>
</dbReference>
<gene>
    <name evidence="1" type="primary">clpP</name>
</gene>
<evidence type="ECO:0000255" key="1">
    <source>
        <dbReference type="HAMAP-Rule" id="MF_00444"/>
    </source>
</evidence>
<organism>
    <name type="scientific">Glycine max</name>
    <name type="common">Soybean</name>
    <name type="synonym">Glycine hispida</name>
    <dbReference type="NCBI Taxonomy" id="3847"/>
    <lineage>
        <taxon>Eukaryota</taxon>
        <taxon>Viridiplantae</taxon>
        <taxon>Streptophyta</taxon>
        <taxon>Embryophyta</taxon>
        <taxon>Tracheophyta</taxon>
        <taxon>Spermatophyta</taxon>
        <taxon>Magnoliopsida</taxon>
        <taxon>eudicotyledons</taxon>
        <taxon>Gunneridae</taxon>
        <taxon>Pentapetalae</taxon>
        <taxon>rosids</taxon>
        <taxon>fabids</taxon>
        <taxon>Fabales</taxon>
        <taxon>Fabaceae</taxon>
        <taxon>Papilionoideae</taxon>
        <taxon>50 kb inversion clade</taxon>
        <taxon>NPAAA clade</taxon>
        <taxon>indigoferoid/millettioid clade</taxon>
        <taxon>Phaseoleae</taxon>
        <taxon>Glycine</taxon>
        <taxon>Glycine subgen. Soja</taxon>
    </lineage>
</organism>
<feature type="chain" id="PRO_0000275285" description="ATP-dependent Clp protease proteolytic subunit">
    <location>
        <begin position="1"/>
        <end position="196"/>
    </location>
</feature>
<feature type="active site" description="Nucleophile" evidence="1">
    <location>
        <position position="101"/>
    </location>
</feature>
<feature type="active site" evidence="1">
    <location>
        <position position="126"/>
    </location>
</feature>
<name>CLPP_SOYBN</name>
<geneLocation type="chloroplast"/>
<accession>Q2PMR0</accession>